<sequence length="402" mass="44375">MTDSWTWLQRGTHEIFPDQPESADPDVSLLARLQQGDRPLRIKLGIDPTGSDIHLGHSIIFRKLRQFQDAGHTAVLIIGDFTARIGDPTGKSEVRRQLTAEDVQRNAETYLDQLRPILDFETPGRLEIRYNSEWLAGLDLAKILELLGTMTVGQMLAKEGFSERYDKGTPVYLHEFLYPLMQGYDSVAVQSDVELGGTDQKFNIAVGRDLQRHFGLQPQFGLLLPILIGLDGSQKMSKSLGNYVGLNEDALSMYSKLEKVPDALVADYFELLTSQDLAALPENPRDRQKLLALDVVSQYHGAEAAAAAQKAAQELVQGSAVQAEAVPEFPLSQVNFPAKAFYLVSAVGLGLTSSEARRQIQGGAVRLDGQKLDDPNHIFEAPTALKGRVIQVGKKKFVRLVL</sequence>
<gene>
    <name evidence="1" type="primary">tyrS</name>
    <name type="ordered locus">Synpcc7942_2570</name>
</gene>
<feature type="chain" id="PRO_0000236769" description="Tyrosine--tRNA ligase">
    <location>
        <begin position="1"/>
        <end position="402"/>
    </location>
</feature>
<feature type="domain" description="S4 RNA-binding" evidence="1">
    <location>
        <begin position="338"/>
        <end position="402"/>
    </location>
</feature>
<feature type="short sequence motif" description="'HIGH' region">
    <location>
        <begin position="48"/>
        <end position="57"/>
    </location>
</feature>
<feature type="short sequence motif" description="'KMSKS' region">
    <location>
        <begin position="235"/>
        <end position="239"/>
    </location>
</feature>
<feature type="binding site" evidence="1">
    <location>
        <position position="238"/>
    </location>
    <ligand>
        <name>ATP</name>
        <dbReference type="ChEBI" id="CHEBI:30616"/>
    </ligand>
</feature>
<protein>
    <recommendedName>
        <fullName evidence="1">Tyrosine--tRNA ligase</fullName>
        <ecNumber evidence="1">6.1.1.1</ecNumber>
    </recommendedName>
    <alternativeName>
        <fullName evidence="1">Tyrosyl-tRNA synthetase</fullName>
        <shortName evidence="1">TyrRS</shortName>
    </alternativeName>
</protein>
<evidence type="ECO:0000255" key="1">
    <source>
        <dbReference type="HAMAP-Rule" id="MF_02007"/>
    </source>
</evidence>
<organism>
    <name type="scientific">Synechococcus elongatus (strain ATCC 33912 / PCC 7942 / FACHB-805)</name>
    <name type="common">Anacystis nidulans R2</name>
    <dbReference type="NCBI Taxonomy" id="1140"/>
    <lineage>
        <taxon>Bacteria</taxon>
        <taxon>Bacillati</taxon>
        <taxon>Cyanobacteriota</taxon>
        <taxon>Cyanophyceae</taxon>
        <taxon>Synechococcales</taxon>
        <taxon>Synechococcaceae</taxon>
        <taxon>Synechococcus</taxon>
    </lineage>
</organism>
<accession>Q31K19</accession>
<name>SYY_SYNE7</name>
<reference key="1">
    <citation type="submission" date="2005-08" db="EMBL/GenBank/DDBJ databases">
        <title>Complete sequence of chromosome 1 of Synechococcus elongatus PCC 7942.</title>
        <authorList>
            <consortium name="US DOE Joint Genome Institute"/>
            <person name="Copeland A."/>
            <person name="Lucas S."/>
            <person name="Lapidus A."/>
            <person name="Barry K."/>
            <person name="Detter J.C."/>
            <person name="Glavina T."/>
            <person name="Hammon N."/>
            <person name="Israni S."/>
            <person name="Pitluck S."/>
            <person name="Schmutz J."/>
            <person name="Larimer F."/>
            <person name="Land M."/>
            <person name="Kyrpides N."/>
            <person name="Lykidis A."/>
            <person name="Golden S."/>
            <person name="Richardson P."/>
        </authorList>
    </citation>
    <scope>NUCLEOTIDE SEQUENCE [LARGE SCALE GENOMIC DNA]</scope>
    <source>
        <strain>ATCC 33912 / PCC 7942 / FACHB-805</strain>
    </source>
</reference>
<keyword id="KW-0030">Aminoacyl-tRNA synthetase</keyword>
<keyword id="KW-0067">ATP-binding</keyword>
<keyword id="KW-0963">Cytoplasm</keyword>
<keyword id="KW-0436">Ligase</keyword>
<keyword id="KW-0547">Nucleotide-binding</keyword>
<keyword id="KW-0648">Protein biosynthesis</keyword>
<keyword id="KW-1185">Reference proteome</keyword>
<keyword id="KW-0694">RNA-binding</keyword>
<dbReference type="EC" id="6.1.1.1" evidence="1"/>
<dbReference type="EMBL" id="CP000100">
    <property type="protein sequence ID" value="ABB58600.1"/>
    <property type="molecule type" value="Genomic_DNA"/>
</dbReference>
<dbReference type="RefSeq" id="WP_011243850.1">
    <property type="nucleotide sequence ID" value="NZ_JACJTX010000001.1"/>
</dbReference>
<dbReference type="SMR" id="Q31K19"/>
<dbReference type="STRING" id="1140.Synpcc7942_2570"/>
<dbReference type="PaxDb" id="1140-Synpcc7942_2570"/>
<dbReference type="GeneID" id="72431464"/>
<dbReference type="KEGG" id="syf:Synpcc7942_2570"/>
<dbReference type="eggNOG" id="COG0162">
    <property type="taxonomic scope" value="Bacteria"/>
</dbReference>
<dbReference type="HOGENOM" id="CLU_024003_5_0_3"/>
<dbReference type="OrthoDB" id="9804243at2"/>
<dbReference type="BioCyc" id="SYNEL:SYNPCC7942_2570-MONOMER"/>
<dbReference type="Proteomes" id="UP000889800">
    <property type="component" value="Chromosome"/>
</dbReference>
<dbReference type="GO" id="GO:0005829">
    <property type="term" value="C:cytosol"/>
    <property type="evidence" value="ECO:0007669"/>
    <property type="project" value="TreeGrafter"/>
</dbReference>
<dbReference type="GO" id="GO:0005524">
    <property type="term" value="F:ATP binding"/>
    <property type="evidence" value="ECO:0007669"/>
    <property type="project" value="UniProtKB-UniRule"/>
</dbReference>
<dbReference type="GO" id="GO:0003723">
    <property type="term" value="F:RNA binding"/>
    <property type="evidence" value="ECO:0007669"/>
    <property type="project" value="UniProtKB-KW"/>
</dbReference>
<dbReference type="GO" id="GO:0004831">
    <property type="term" value="F:tyrosine-tRNA ligase activity"/>
    <property type="evidence" value="ECO:0007669"/>
    <property type="project" value="UniProtKB-UniRule"/>
</dbReference>
<dbReference type="GO" id="GO:0006437">
    <property type="term" value="P:tyrosyl-tRNA aminoacylation"/>
    <property type="evidence" value="ECO:0007669"/>
    <property type="project" value="UniProtKB-UniRule"/>
</dbReference>
<dbReference type="CDD" id="cd00165">
    <property type="entry name" value="S4"/>
    <property type="match status" value="1"/>
</dbReference>
<dbReference type="CDD" id="cd00805">
    <property type="entry name" value="TyrRS_core"/>
    <property type="match status" value="1"/>
</dbReference>
<dbReference type="Gene3D" id="3.40.50.620">
    <property type="entry name" value="HUPs"/>
    <property type="match status" value="1"/>
</dbReference>
<dbReference type="Gene3D" id="3.10.290.10">
    <property type="entry name" value="RNA-binding S4 domain"/>
    <property type="match status" value="1"/>
</dbReference>
<dbReference type="Gene3D" id="1.10.240.10">
    <property type="entry name" value="Tyrosyl-Transfer RNA Synthetase"/>
    <property type="match status" value="1"/>
</dbReference>
<dbReference type="HAMAP" id="MF_02007">
    <property type="entry name" value="Tyr_tRNA_synth_type2"/>
    <property type="match status" value="1"/>
</dbReference>
<dbReference type="InterPro" id="IPR002305">
    <property type="entry name" value="aa-tRNA-synth_Ic"/>
</dbReference>
<dbReference type="InterPro" id="IPR014729">
    <property type="entry name" value="Rossmann-like_a/b/a_fold"/>
</dbReference>
<dbReference type="InterPro" id="IPR002942">
    <property type="entry name" value="S4_RNA-bd"/>
</dbReference>
<dbReference type="InterPro" id="IPR036986">
    <property type="entry name" value="S4_RNA-bd_sf"/>
</dbReference>
<dbReference type="InterPro" id="IPR002307">
    <property type="entry name" value="Tyr-tRNA-ligase"/>
</dbReference>
<dbReference type="InterPro" id="IPR024088">
    <property type="entry name" value="Tyr-tRNA-ligase_bac-type"/>
</dbReference>
<dbReference type="InterPro" id="IPR024108">
    <property type="entry name" value="Tyr-tRNA-ligase_bac_2"/>
</dbReference>
<dbReference type="NCBIfam" id="TIGR00234">
    <property type="entry name" value="tyrS"/>
    <property type="match status" value="1"/>
</dbReference>
<dbReference type="PANTHER" id="PTHR11766:SF1">
    <property type="entry name" value="TYROSINE--TRNA LIGASE"/>
    <property type="match status" value="1"/>
</dbReference>
<dbReference type="PANTHER" id="PTHR11766">
    <property type="entry name" value="TYROSYL-TRNA SYNTHETASE"/>
    <property type="match status" value="1"/>
</dbReference>
<dbReference type="Pfam" id="PF01479">
    <property type="entry name" value="S4"/>
    <property type="match status" value="1"/>
</dbReference>
<dbReference type="Pfam" id="PF00579">
    <property type="entry name" value="tRNA-synt_1b"/>
    <property type="match status" value="1"/>
</dbReference>
<dbReference type="PRINTS" id="PR01040">
    <property type="entry name" value="TRNASYNTHTYR"/>
</dbReference>
<dbReference type="SUPFAM" id="SSF55174">
    <property type="entry name" value="Alpha-L RNA-binding motif"/>
    <property type="match status" value="1"/>
</dbReference>
<dbReference type="SUPFAM" id="SSF52374">
    <property type="entry name" value="Nucleotidylyl transferase"/>
    <property type="match status" value="1"/>
</dbReference>
<dbReference type="PROSITE" id="PS50889">
    <property type="entry name" value="S4"/>
    <property type="match status" value="1"/>
</dbReference>
<proteinExistence type="inferred from homology"/>
<comment type="function">
    <text evidence="1">Catalyzes the attachment of tyrosine to tRNA(Tyr) in a two-step reaction: tyrosine is first activated by ATP to form Tyr-AMP and then transferred to the acceptor end of tRNA(Tyr).</text>
</comment>
<comment type="catalytic activity">
    <reaction evidence="1">
        <text>tRNA(Tyr) + L-tyrosine + ATP = L-tyrosyl-tRNA(Tyr) + AMP + diphosphate + H(+)</text>
        <dbReference type="Rhea" id="RHEA:10220"/>
        <dbReference type="Rhea" id="RHEA-COMP:9706"/>
        <dbReference type="Rhea" id="RHEA-COMP:9707"/>
        <dbReference type="ChEBI" id="CHEBI:15378"/>
        <dbReference type="ChEBI" id="CHEBI:30616"/>
        <dbReference type="ChEBI" id="CHEBI:33019"/>
        <dbReference type="ChEBI" id="CHEBI:58315"/>
        <dbReference type="ChEBI" id="CHEBI:78442"/>
        <dbReference type="ChEBI" id="CHEBI:78536"/>
        <dbReference type="ChEBI" id="CHEBI:456215"/>
        <dbReference type="EC" id="6.1.1.1"/>
    </reaction>
</comment>
<comment type="subunit">
    <text evidence="1">Homodimer.</text>
</comment>
<comment type="subcellular location">
    <subcellularLocation>
        <location evidence="1">Cytoplasm</location>
    </subcellularLocation>
</comment>
<comment type="similarity">
    <text evidence="1">Belongs to the class-I aminoacyl-tRNA synthetase family. TyrS type 2 subfamily.</text>
</comment>